<reference key="1">
    <citation type="journal article" date="2005" name="Proc. Natl. Acad. Sci. U.S.A.">
        <title>Complete genome sequence of the probiotic lactic acid bacterium Lactobacillus acidophilus NCFM.</title>
        <authorList>
            <person name="Altermann E."/>
            <person name="Russell W.M."/>
            <person name="Azcarate-Peril M.A."/>
            <person name="Barrangou R."/>
            <person name="Buck B.L."/>
            <person name="McAuliffe O."/>
            <person name="Souther N."/>
            <person name="Dobson A."/>
            <person name="Duong T."/>
            <person name="Callanan M."/>
            <person name="Lick S."/>
            <person name="Hamrick A."/>
            <person name="Cano R."/>
            <person name="Klaenhammer T.R."/>
        </authorList>
    </citation>
    <scope>NUCLEOTIDE SEQUENCE [LARGE SCALE GENOMIC DNA]</scope>
    <source>
        <strain>ATCC 700396 / NCK56 / N2 / NCFM</strain>
    </source>
</reference>
<evidence type="ECO:0000255" key="1">
    <source>
        <dbReference type="HAMAP-Rule" id="MF_01342"/>
    </source>
</evidence>
<evidence type="ECO:0000305" key="2"/>
<proteinExistence type="inferred from homology"/>
<keyword id="KW-1185">Reference proteome</keyword>
<keyword id="KW-0687">Ribonucleoprotein</keyword>
<keyword id="KW-0689">Ribosomal protein</keyword>
<keyword id="KW-0694">RNA-binding</keyword>
<keyword id="KW-0699">rRNA-binding</keyword>
<keyword id="KW-0820">tRNA-binding</keyword>
<comment type="function">
    <text evidence="1">Binds 23S rRNA and is also seen to make contacts with the A and possibly P site tRNAs.</text>
</comment>
<comment type="subunit">
    <text evidence="1">Part of the 50S ribosomal subunit.</text>
</comment>
<comment type="similarity">
    <text evidence="1">Belongs to the universal ribosomal protein uL16 family.</text>
</comment>
<protein>
    <recommendedName>
        <fullName evidence="1">Large ribosomal subunit protein uL16</fullName>
    </recommendedName>
    <alternativeName>
        <fullName evidence="2">50S ribosomal protein L16</fullName>
    </alternativeName>
</protein>
<gene>
    <name evidence="1" type="primary">rplP</name>
    <name type="ordered locus">LBA0298</name>
</gene>
<accession>Q5FM83</accession>
<feature type="chain" id="PRO_0000062118" description="Large ribosomal subunit protein uL16">
    <location>
        <begin position="1"/>
        <end position="146"/>
    </location>
</feature>
<name>RL16_LACAC</name>
<sequence length="146" mass="16178">MPLVPKRVKHRREFRGKMRGAAKGGKYIAFGEYGLEALESHWITNRQIEAARVAMTRYMKRGGKVWIRIFPQKSYTAKGVGVRMGSGKGAPAGWVAVVKREKILFEIGGVSEEVAREALRLASTKLPIKTKFVTRSSEVGGESNEG</sequence>
<organism>
    <name type="scientific">Lactobacillus acidophilus (strain ATCC 700396 / NCK56 / N2 / NCFM)</name>
    <dbReference type="NCBI Taxonomy" id="272621"/>
    <lineage>
        <taxon>Bacteria</taxon>
        <taxon>Bacillati</taxon>
        <taxon>Bacillota</taxon>
        <taxon>Bacilli</taxon>
        <taxon>Lactobacillales</taxon>
        <taxon>Lactobacillaceae</taxon>
        <taxon>Lactobacillus</taxon>
    </lineage>
</organism>
<dbReference type="EMBL" id="CP000033">
    <property type="protein sequence ID" value="AAV42191.1"/>
    <property type="molecule type" value="Genomic_DNA"/>
</dbReference>
<dbReference type="RefSeq" id="WP_003549031.1">
    <property type="nucleotide sequence ID" value="NC_006814.3"/>
</dbReference>
<dbReference type="RefSeq" id="YP_193222.1">
    <property type="nucleotide sequence ID" value="NC_006814.3"/>
</dbReference>
<dbReference type="SMR" id="Q5FM83"/>
<dbReference type="STRING" id="272621.LBA0298"/>
<dbReference type="GeneID" id="93290594"/>
<dbReference type="KEGG" id="lac:LBA0298"/>
<dbReference type="PATRIC" id="fig|272621.13.peg.284"/>
<dbReference type="eggNOG" id="COG0197">
    <property type="taxonomic scope" value="Bacteria"/>
</dbReference>
<dbReference type="HOGENOM" id="CLU_078858_2_1_9"/>
<dbReference type="OrthoDB" id="9802589at2"/>
<dbReference type="BioCyc" id="LACI272621:G1G49-292-MONOMER"/>
<dbReference type="Proteomes" id="UP000006381">
    <property type="component" value="Chromosome"/>
</dbReference>
<dbReference type="GO" id="GO:0022625">
    <property type="term" value="C:cytosolic large ribosomal subunit"/>
    <property type="evidence" value="ECO:0007669"/>
    <property type="project" value="TreeGrafter"/>
</dbReference>
<dbReference type="GO" id="GO:0019843">
    <property type="term" value="F:rRNA binding"/>
    <property type="evidence" value="ECO:0007669"/>
    <property type="project" value="UniProtKB-UniRule"/>
</dbReference>
<dbReference type="GO" id="GO:0003735">
    <property type="term" value="F:structural constituent of ribosome"/>
    <property type="evidence" value="ECO:0007669"/>
    <property type="project" value="InterPro"/>
</dbReference>
<dbReference type="GO" id="GO:0000049">
    <property type="term" value="F:tRNA binding"/>
    <property type="evidence" value="ECO:0007669"/>
    <property type="project" value="UniProtKB-KW"/>
</dbReference>
<dbReference type="GO" id="GO:0006412">
    <property type="term" value="P:translation"/>
    <property type="evidence" value="ECO:0007669"/>
    <property type="project" value="UniProtKB-UniRule"/>
</dbReference>
<dbReference type="CDD" id="cd01433">
    <property type="entry name" value="Ribosomal_L16_L10e"/>
    <property type="match status" value="1"/>
</dbReference>
<dbReference type="FunFam" id="3.90.1170.10:FF:000001">
    <property type="entry name" value="50S ribosomal protein L16"/>
    <property type="match status" value="1"/>
</dbReference>
<dbReference type="Gene3D" id="3.90.1170.10">
    <property type="entry name" value="Ribosomal protein L10e/L16"/>
    <property type="match status" value="1"/>
</dbReference>
<dbReference type="HAMAP" id="MF_01342">
    <property type="entry name" value="Ribosomal_uL16"/>
    <property type="match status" value="1"/>
</dbReference>
<dbReference type="InterPro" id="IPR047873">
    <property type="entry name" value="Ribosomal_uL16"/>
</dbReference>
<dbReference type="InterPro" id="IPR000114">
    <property type="entry name" value="Ribosomal_uL16_bact-type"/>
</dbReference>
<dbReference type="InterPro" id="IPR020798">
    <property type="entry name" value="Ribosomal_uL16_CS"/>
</dbReference>
<dbReference type="InterPro" id="IPR016180">
    <property type="entry name" value="Ribosomal_uL16_dom"/>
</dbReference>
<dbReference type="InterPro" id="IPR036920">
    <property type="entry name" value="Ribosomal_uL16_sf"/>
</dbReference>
<dbReference type="NCBIfam" id="TIGR01164">
    <property type="entry name" value="rplP_bact"/>
    <property type="match status" value="1"/>
</dbReference>
<dbReference type="PANTHER" id="PTHR12220">
    <property type="entry name" value="50S/60S RIBOSOMAL PROTEIN L16"/>
    <property type="match status" value="1"/>
</dbReference>
<dbReference type="PANTHER" id="PTHR12220:SF13">
    <property type="entry name" value="LARGE RIBOSOMAL SUBUNIT PROTEIN UL16M"/>
    <property type="match status" value="1"/>
</dbReference>
<dbReference type="Pfam" id="PF00252">
    <property type="entry name" value="Ribosomal_L16"/>
    <property type="match status" value="1"/>
</dbReference>
<dbReference type="PRINTS" id="PR00060">
    <property type="entry name" value="RIBOSOMALL16"/>
</dbReference>
<dbReference type="SUPFAM" id="SSF54686">
    <property type="entry name" value="Ribosomal protein L16p/L10e"/>
    <property type="match status" value="1"/>
</dbReference>
<dbReference type="PROSITE" id="PS00586">
    <property type="entry name" value="RIBOSOMAL_L16_1"/>
    <property type="match status" value="1"/>
</dbReference>
<dbReference type="PROSITE" id="PS00701">
    <property type="entry name" value="RIBOSOMAL_L16_2"/>
    <property type="match status" value="1"/>
</dbReference>